<dbReference type="EC" id="4.2.1.104" evidence="1"/>
<dbReference type="EMBL" id="BX569695">
    <property type="protein sequence ID" value="CAE09005.1"/>
    <property type="molecule type" value="Genomic_DNA"/>
</dbReference>
<dbReference type="SMR" id="Q7U3E2"/>
<dbReference type="STRING" id="84588.SYNW2490"/>
<dbReference type="KEGG" id="syw:SYNW2490"/>
<dbReference type="eggNOG" id="COG1513">
    <property type="taxonomic scope" value="Bacteria"/>
</dbReference>
<dbReference type="HOGENOM" id="CLU_103452_1_0_3"/>
<dbReference type="Proteomes" id="UP000001422">
    <property type="component" value="Chromosome"/>
</dbReference>
<dbReference type="GO" id="GO:0008824">
    <property type="term" value="F:cyanate hydratase activity"/>
    <property type="evidence" value="ECO:0007669"/>
    <property type="project" value="UniProtKB-UniRule"/>
</dbReference>
<dbReference type="GO" id="GO:0003677">
    <property type="term" value="F:DNA binding"/>
    <property type="evidence" value="ECO:0007669"/>
    <property type="project" value="InterPro"/>
</dbReference>
<dbReference type="GO" id="GO:0009439">
    <property type="term" value="P:cyanate metabolic process"/>
    <property type="evidence" value="ECO:0007669"/>
    <property type="project" value="UniProtKB-UniRule"/>
</dbReference>
<dbReference type="CDD" id="cd00559">
    <property type="entry name" value="Cyanase_C"/>
    <property type="match status" value="1"/>
</dbReference>
<dbReference type="CDD" id="cd00093">
    <property type="entry name" value="HTH_XRE"/>
    <property type="match status" value="1"/>
</dbReference>
<dbReference type="Gene3D" id="3.30.1160.10">
    <property type="entry name" value="Cyanate lyase, C-terminal domain"/>
    <property type="match status" value="1"/>
</dbReference>
<dbReference type="Gene3D" id="1.10.260.40">
    <property type="entry name" value="lambda repressor-like DNA-binding domains"/>
    <property type="match status" value="1"/>
</dbReference>
<dbReference type="HAMAP" id="MF_00535">
    <property type="entry name" value="Cyanate_hydrat"/>
    <property type="match status" value="1"/>
</dbReference>
<dbReference type="InterPro" id="IPR001387">
    <property type="entry name" value="Cro/C1-type_HTH"/>
</dbReference>
<dbReference type="InterPro" id="IPR008076">
    <property type="entry name" value="Cyanase"/>
</dbReference>
<dbReference type="InterPro" id="IPR003712">
    <property type="entry name" value="Cyanate_lyase_C"/>
</dbReference>
<dbReference type="InterPro" id="IPR036581">
    <property type="entry name" value="Cyanate_lyase_C_sf"/>
</dbReference>
<dbReference type="InterPro" id="IPR048564">
    <property type="entry name" value="CYNS_N"/>
</dbReference>
<dbReference type="InterPro" id="IPR010982">
    <property type="entry name" value="Lambda_DNA-bd_dom_sf"/>
</dbReference>
<dbReference type="NCBIfam" id="TIGR00673">
    <property type="entry name" value="cynS"/>
    <property type="match status" value="1"/>
</dbReference>
<dbReference type="NCBIfam" id="NF002773">
    <property type="entry name" value="PRK02866.1"/>
    <property type="match status" value="1"/>
</dbReference>
<dbReference type="PANTHER" id="PTHR34186">
    <property type="entry name" value="CYANATE HYDRATASE"/>
    <property type="match status" value="1"/>
</dbReference>
<dbReference type="PANTHER" id="PTHR34186:SF2">
    <property type="entry name" value="CYANATE HYDRATASE"/>
    <property type="match status" value="1"/>
</dbReference>
<dbReference type="Pfam" id="PF02560">
    <property type="entry name" value="Cyanate_lyase"/>
    <property type="match status" value="1"/>
</dbReference>
<dbReference type="Pfam" id="PF21291">
    <property type="entry name" value="CYNS_N"/>
    <property type="match status" value="1"/>
</dbReference>
<dbReference type="PIRSF" id="PIRSF001263">
    <property type="entry name" value="Cyanate_hydratas"/>
    <property type="match status" value="1"/>
</dbReference>
<dbReference type="PRINTS" id="PR01693">
    <property type="entry name" value="CYANASE"/>
</dbReference>
<dbReference type="SMART" id="SM01116">
    <property type="entry name" value="Cyanate_lyase"/>
    <property type="match status" value="1"/>
</dbReference>
<dbReference type="SUPFAM" id="SSF55234">
    <property type="entry name" value="Cyanase C-terminal domain"/>
    <property type="match status" value="1"/>
</dbReference>
<dbReference type="SUPFAM" id="SSF47413">
    <property type="entry name" value="lambda repressor-like DNA-binding domains"/>
    <property type="match status" value="1"/>
</dbReference>
<protein>
    <recommendedName>
        <fullName evidence="1">Cyanate hydratase</fullName>
        <shortName evidence="1">Cyanase</shortName>
        <ecNumber evidence="1">4.2.1.104</ecNumber>
    </recommendedName>
    <alternativeName>
        <fullName evidence="1">Cyanate hydrolase</fullName>
    </alternativeName>
    <alternativeName>
        <fullName evidence="1">Cyanate lyase</fullName>
    </alternativeName>
</protein>
<feature type="chain" id="PRO_0000187531" description="Cyanate hydratase">
    <location>
        <begin position="1"/>
        <end position="147"/>
    </location>
</feature>
<feature type="active site" evidence="1">
    <location>
        <position position="88"/>
    </location>
</feature>
<feature type="active site" evidence="1">
    <location>
        <position position="91"/>
    </location>
</feature>
<feature type="active site" evidence="1">
    <location>
        <position position="114"/>
    </location>
</feature>
<reference key="1">
    <citation type="journal article" date="2003" name="Nature">
        <title>The genome of a motile marine Synechococcus.</title>
        <authorList>
            <person name="Palenik B."/>
            <person name="Brahamsha B."/>
            <person name="Larimer F.W."/>
            <person name="Land M.L."/>
            <person name="Hauser L."/>
            <person name="Chain P."/>
            <person name="Lamerdin J.E."/>
            <person name="Regala W."/>
            <person name="Allen E.E."/>
            <person name="McCarren J."/>
            <person name="Paulsen I.T."/>
            <person name="Dufresne A."/>
            <person name="Partensky F."/>
            <person name="Webb E.A."/>
            <person name="Waterbury J."/>
        </authorList>
    </citation>
    <scope>NUCLEOTIDE SEQUENCE [LARGE SCALE GENOMIC DNA]</scope>
    <source>
        <strain>WH8102</strain>
    </source>
</reference>
<comment type="function">
    <text evidence="1">Catalyzes the reaction of cyanate with bicarbonate to produce ammonia and carbon dioxide.</text>
</comment>
<comment type="catalytic activity">
    <reaction evidence="1">
        <text>cyanate + hydrogencarbonate + 3 H(+) = NH4(+) + 2 CO2</text>
        <dbReference type="Rhea" id="RHEA:11120"/>
        <dbReference type="ChEBI" id="CHEBI:15378"/>
        <dbReference type="ChEBI" id="CHEBI:16526"/>
        <dbReference type="ChEBI" id="CHEBI:17544"/>
        <dbReference type="ChEBI" id="CHEBI:28938"/>
        <dbReference type="ChEBI" id="CHEBI:29195"/>
        <dbReference type="EC" id="4.2.1.104"/>
    </reaction>
</comment>
<comment type="similarity">
    <text evidence="1">Belongs to the cyanase family.</text>
</comment>
<name>CYNS_PARMW</name>
<sequence length="147" mass="16221">MTVMSLTATLMAAKKAKGMSFADLEAAIGLDEVWVASLFYGQATASKEEAEKLAGLLSLDAETTAALQEYPTKGSLEPVIPTDPLIYRFYEIMQVYGMPLKDVIQEHFGDGIMSAIDFTIDVDKVEDPKGDRVKIVMCGKFLPYKKW</sequence>
<evidence type="ECO:0000255" key="1">
    <source>
        <dbReference type="HAMAP-Rule" id="MF_00535"/>
    </source>
</evidence>
<keyword id="KW-0456">Lyase</keyword>
<organism>
    <name type="scientific">Parasynechococcus marenigrum (strain WH8102)</name>
    <dbReference type="NCBI Taxonomy" id="84588"/>
    <lineage>
        <taxon>Bacteria</taxon>
        <taxon>Bacillati</taxon>
        <taxon>Cyanobacteriota</taxon>
        <taxon>Cyanophyceae</taxon>
        <taxon>Synechococcales</taxon>
        <taxon>Prochlorococcaceae</taxon>
        <taxon>Parasynechococcus</taxon>
        <taxon>Parasynechococcus marenigrum</taxon>
    </lineage>
</organism>
<proteinExistence type="inferred from homology"/>
<gene>
    <name evidence="1" type="primary">cynS</name>
    <name type="ordered locus">SYNW2490</name>
</gene>
<accession>Q7U3E2</accession>